<feature type="chain" id="PRO_0000434784" description="Trehalose 2-sulfotransferase">
    <location>
        <begin position="1"/>
        <end position="267"/>
    </location>
</feature>
<feature type="active site" description="Proton acceptor" evidence="1">
    <location>
        <position position="36"/>
    </location>
</feature>
<feature type="binding site" evidence="1">
    <location>
        <position position="14"/>
    </location>
    <ligand>
        <name>alpha,alpha-trehalose</name>
        <dbReference type="ChEBI" id="CHEBI:16551"/>
    </ligand>
</feature>
<feature type="binding site" evidence="1">
    <location>
        <begin position="33"/>
        <end position="39"/>
    </location>
    <ligand>
        <name>alpha,alpha-trehalose</name>
        <dbReference type="ChEBI" id="CHEBI:16551"/>
    </ligand>
</feature>
<feature type="binding site" evidence="1">
    <location>
        <position position="48"/>
    </location>
    <ligand>
        <name>alpha,alpha-trehalose</name>
        <dbReference type="ChEBI" id="CHEBI:16551"/>
    </ligand>
</feature>
<feature type="binding site" evidence="1">
    <location>
        <position position="53"/>
    </location>
    <ligand>
        <name>alpha,alpha-trehalose</name>
        <dbReference type="ChEBI" id="CHEBI:16551"/>
    </ligand>
</feature>
<gene>
    <name evidence="4" type="primary">stf0</name>
    <name evidence="6" type="ordered locus">ERDMAN_0329</name>
</gene>
<keyword id="KW-0119">Carbohydrate metabolism</keyword>
<keyword id="KW-0808">Transferase</keyword>
<evidence type="ECO:0000250" key="1">
    <source>
        <dbReference type="UniProtKB" id="A0QQ53"/>
    </source>
</evidence>
<evidence type="ECO:0000250" key="2">
    <source>
        <dbReference type="UniProtKB" id="O53699"/>
    </source>
</evidence>
<evidence type="ECO:0000269" key="3">
    <source>
    </source>
</evidence>
<evidence type="ECO:0000303" key="4">
    <source>
    </source>
</evidence>
<evidence type="ECO:0000305" key="5"/>
<evidence type="ECO:0000312" key="6">
    <source>
        <dbReference type="EMBL" id="BAL64146.1"/>
    </source>
</evidence>
<protein>
    <recommendedName>
        <fullName evidence="2">Trehalose 2-sulfotransferase</fullName>
        <ecNumber evidence="2">2.8.2.37</ecNumber>
    </recommendedName>
</protein>
<dbReference type="EC" id="2.8.2.37" evidence="2"/>
<dbReference type="EMBL" id="AP012340">
    <property type="protein sequence ID" value="BAL64146.1"/>
    <property type="status" value="ALT_INIT"/>
    <property type="molecule type" value="Genomic_DNA"/>
</dbReference>
<dbReference type="RefSeq" id="WP_003401540.1">
    <property type="nucleotide sequence ID" value="NZ_KK339487.1"/>
</dbReference>
<dbReference type="SMR" id="A0A0H3L952"/>
<dbReference type="GeneID" id="45424269"/>
<dbReference type="KEGG" id="mtn:ERDMAN_0329"/>
<dbReference type="PATRIC" id="fig|652616.3.peg.334"/>
<dbReference type="HOGENOM" id="CLU_098614_0_0_11"/>
<dbReference type="GO" id="GO:0016740">
    <property type="term" value="F:transferase activity"/>
    <property type="evidence" value="ECO:0007669"/>
    <property type="project" value="UniProtKB-KW"/>
</dbReference>
<dbReference type="FunFam" id="3.40.50.300:FF:002398">
    <property type="entry name" value="Trehalose 2-sulfotransferase"/>
    <property type="match status" value="1"/>
</dbReference>
<dbReference type="Gene3D" id="3.40.50.300">
    <property type="entry name" value="P-loop containing nucleotide triphosphate hydrolases"/>
    <property type="match status" value="1"/>
</dbReference>
<dbReference type="InterPro" id="IPR027417">
    <property type="entry name" value="P-loop_NTPase"/>
</dbReference>
<dbReference type="InterPro" id="IPR015124">
    <property type="entry name" value="Stf0"/>
</dbReference>
<dbReference type="InterPro" id="IPR024628">
    <property type="entry name" value="Sulfotransferase_Stf0_dom"/>
</dbReference>
<dbReference type="NCBIfam" id="NF047724">
    <property type="entry name" value="TrhSuTaseStf0"/>
    <property type="match status" value="1"/>
</dbReference>
<dbReference type="Pfam" id="PF09037">
    <property type="entry name" value="Sulphotransf"/>
    <property type="match status" value="1"/>
</dbReference>
<dbReference type="PIRSF" id="PIRSF021497">
    <property type="entry name" value="Sulphotransferase_Stf0"/>
    <property type="match status" value="1"/>
</dbReference>
<dbReference type="SUPFAM" id="SSF52540">
    <property type="entry name" value="P-loop containing nucleoside triphosphate hydrolases"/>
    <property type="match status" value="1"/>
</dbReference>
<reference key="1">
    <citation type="journal article" date="2012" name="J. Bacteriol.">
        <title>Complete annotated genome sequence of Mycobacterium tuberculosis Erdman.</title>
        <authorList>
            <person name="Miyoshi-Akiyama T."/>
            <person name="Matsumura K."/>
            <person name="Iwai H."/>
            <person name="Funatogawa K."/>
            <person name="Kirikae T."/>
        </authorList>
    </citation>
    <scope>NUCLEOTIDE SEQUENCE [LARGE SCALE GENOMIC DNA]</scope>
    <source>
        <strain>ATCC 35801 / TMC 107 / Erdman</strain>
    </source>
</reference>
<reference key="2">
    <citation type="journal article" date="2012" name="ACS Chem. Biol.">
        <title>Sulfolipid-1 biosynthesis restricts Mycobacterium tuberculosis growth in human macrophages.</title>
        <authorList>
            <person name="Gilmore S.A."/>
            <person name="Schelle M.W."/>
            <person name="Holsclaw C.M."/>
            <person name="Leigh C.D."/>
            <person name="Jain M."/>
            <person name="Cox J.S."/>
            <person name="Leary J.A."/>
            <person name="Bertozzi C.R."/>
        </authorList>
    </citation>
    <scope>FUNCTION</scope>
    <scope>DISRUPTION PHENOTYPE</scope>
    <scope>PATHWAY</scope>
    <source>
        <strain>ATCC 35801 / TMC 107 / Erdman</strain>
    </source>
</reference>
<sequence length="267" mass="29775">MSRAVRPYLVLATQRSGSTLLVESLRATGCAGEPQEFFQYLPSTGMAPQPREWFAGVDDDTILQLLDPLDPGTPDTATPVAWREHVRTSGRTPNGVWGGKLMWNQTALLQQRAAQLPDRSGDGLRAAIRDVIGNEPVFVHVHRPDVVSQAVSFWRAVQTQVWRGHPDPKRDSQAVYHAGAIAHIIRNLRDQENGWRAWFAEEGIDPIDIAYPVLWRNLTAIVASVLDAIGQDPKLAPAPMLERQANQRSDEWVDRYRAEAPRLGLPT</sequence>
<proteinExistence type="inferred from homology"/>
<name>STF0_MYCTE</name>
<comment type="function">
    <text evidence="2 3">Catalyzes the sulfuryl group transfer from 3'-phosphoadenosine-5'-phosphosulfate (PAPS) to trehalose, leading to trehalose-2-sulfate (T2S). The sulfation of trehalose is the first step in the biosynthesis of sulfolipid-1 (SL-1), a major cell wall glycolipid and the most abundant sulfated metabolite found in Mycobacterium tuberculosis, that is a potential virulence factor thought to mediate host-pathogen interactions.</text>
</comment>
<comment type="catalytic activity">
    <reaction evidence="2">
        <text>alpha,alpha-trehalose + 3'-phosphoadenylyl sulfate = 2-O-sulfo-alpha,alpha-trehalose + adenosine 3',5'-bisphosphate + H(+)</text>
        <dbReference type="Rhea" id="RHEA:41608"/>
        <dbReference type="ChEBI" id="CHEBI:15378"/>
        <dbReference type="ChEBI" id="CHEBI:16551"/>
        <dbReference type="ChEBI" id="CHEBI:58339"/>
        <dbReference type="ChEBI" id="CHEBI:58343"/>
        <dbReference type="ChEBI" id="CHEBI:60091"/>
        <dbReference type="EC" id="2.8.2.37"/>
    </reaction>
</comment>
<comment type="pathway">
    <text evidence="3">Glycolipid metabolism.</text>
</comment>
<comment type="subunit">
    <text evidence="1">Homodimer.</text>
</comment>
<comment type="disruption phenotype">
    <text evidence="3">Loss of T2S and SL-1 formation, but phthiocerol dimycocerosate (PDIM) biosynthesis remains intact. Cells lacking this gene exhibit augmented survival in human but not murine macrophages, suggesting that SL-1 negatively regulates the intracellular growth of M.tuberculosis in a species-specific manner. Moreover, the mutant strains exhibit increased resistance in vitro to a human cationic antimicrobial peptide, LL-37, while they do not show global defects in overall cell envelope integrity.</text>
</comment>
<comment type="similarity">
    <text evidence="5">Belongs to the Stf0 sulfotransferase family.</text>
</comment>
<comment type="sequence caution" evidence="5">
    <conflict type="erroneous initiation">
        <sequence resource="EMBL-CDS" id="BAL64146"/>
    </conflict>
    <text>Truncated N-terminus.</text>
</comment>
<accession>A0A0H3L952</accession>
<organism>
    <name type="scientific">Mycobacterium tuberculosis (strain ATCC 35801 / TMC 107 / Erdman)</name>
    <dbReference type="NCBI Taxonomy" id="652616"/>
    <lineage>
        <taxon>Bacteria</taxon>
        <taxon>Bacillati</taxon>
        <taxon>Actinomycetota</taxon>
        <taxon>Actinomycetes</taxon>
        <taxon>Mycobacteriales</taxon>
        <taxon>Mycobacteriaceae</taxon>
        <taxon>Mycobacterium</taxon>
        <taxon>Mycobacterium tuberculosis complex</taxon>
    </lineage>
</organism>